<organism>
    <name type="scientific">Shigella dysenteriae serotype 1 (strain Sd197)</name>
    <dbReference type="NCBI Taxonomy" id="300267"/>
    <lineage>
        <taxon>Bacteria</taxon>
        <taxon>Pseudomonadati</taxon>
        <taxon>Pseudomonadota</taxon>
        <taxon>Gammaproteobacteria</taxon>
        <taxon>Enterobacterales</taxon>
        <taxon>Enterobacteriaceae</taxon>
        <taxon>Shigella</taxon>
    </lineage>
</organism>
<protein>
    <recommendedName>
        <fullName evidence="1">Ribosomal RNA small subunit methyltransferase A</fullName>
        <ecNumber evidence="1">2.1.1.182</ecNumber>
    </recommendedName>
    <alternativeName>
        <fullName evidence="1">16S rRNA (adenine(1518)-N(6)/adenine(1519)-N(6))-dimethyltransferase</fullName>
    </alternativeName>
    <alternativeName>
        <fullName evidence="1">16S rRNA dimethyladenosine transferase</fullName>
    </alternativeName>
    <alternativeName>
        <fullName evidence="1">16S rRNA dimethylase</fullName>
    </alternativeName>
    <alternativeName>
        <fullName evidence="1">S-adenosylmethionine-6-N', N'-adenosyl(rRNA) dimethyltransferase</fullName>
    </alternativeName>
</protein>
<comment type="function">
    <text evidence="1">Specifically dimethylates two adjacent adenosines (A1518 and A1519) in the loop of a conserved hairpin near the 3'-end of 16S rRNA in the 30S particle. May play a critical role in biogenesis of 30S subunits.</text>
</comment>
<comment type="catalytic activity">
    <reaction evidence="1">
        <text>adenosine(1518)/adenosine(1519) in 16S rRNA + 4 S-adenosyl-L-methionine = N(6)-dimethyladenosine(1518)/N(6)-dimethyladenosine(1519) in 16S rRNA + 4 S-adenosyl-L-homocysteine + 4 H(+)</text>
        <dbReference type="Rhea" id="RHEA:19609"/>
        <dbReference type="Rhea" id="RHEA-COMP:10232"/>
        <dbReference type="Rhea" id="RHEA-COMP:10233"/>
        <dbReference type="ChEBI" id="CHEBI:15378"/>
        <dbReference type="ChEBI" id="CHEBI:57856"/>
        <dbReference type="ChEBI" id="CHEBI:59789"/>
        <dbReference type="ChEBI" id="CHEBI:74411"/>
        <dbReference type="ChEBI" id="CHEBI:74493"/>
        <dbReference type="EC" id="2.1.1.182"/>
    </reaction>
</comment>
<comment type="subcellular location">
    <subcellularLocation>
        <location evidence="1">Cytoplasm</location>
    </subcellularLocation>
</comment>
<comment type="similarity">
    <text evidence="1">Belongs to the class I-like SAM-binding methyltransferase superfamily. rRNA adenine N(6)-methyltransferase family. RsmA subfamily.</text>
</comment>
<gene>
    <name evidence="1" type="primary">rsmA</name>
    <name evidence="1" type="synonym">ksgA</name>
    <name type="ordered locus">SDY_0076</name>
</gene>
<evidence type="ECO:0000255" key="1">
    <source>
        <dbReference type="HAMAP-Rule" id="MF_00607"/>
    </source>
</evidence>
<keyword id="KW-0963">Cytoplasm</keyword>
<keyword id="KW-0489">Methyltransferase</keyword>
<keyword id="KW-1185">Reference proteome</keyword>
<keyword id="KW-0694">RNA-binding</keyword>
<keyword id="KW-0698">rRNA processing</keyword>
<keyword id="KW-0949">S-adenosyl-L-methionine</keyword>
<keyword id="KW-0808">Transferase</keyword>
<accession>Q32K43</accession>
<feature type="chain" id="PRO_0000257346" description="Ribosomal RNA small subunit methyltransferase A">
    <location>
        <begin position="1"/>
        <end position="273"/>
    </location>
</feature>
<feature type="binding site" evidence="1">
    <location>
        <position position="18"/>
    </location>
    <ligand>
        <name>S-adenosyl-L-methionine</name>
        <dbReference type="ChEBI" id="CHEBI:59789"/>
    </ligand>
</feature>
<feature type="binding site" evidence="1">
    <location>
        <position position="20"/>
    </location>
    <ligand>
        <name>S-adenosyl-L-methionine</name>
        <dbReference type="ChEBI" id="CHEBI:59789"/>
    </ligand>
</feature>
<feature type="binding site" evidence="1">
    <location>
        <position position="45"/>
    </location>
    <ligand>
        <name>S-adenosyl-L-methionine</name>
        <dbReference type="ChEBI" id="CHEBI:59789"/>
    </ligand>
</feature>
<feature type="binding site" evidence="1">
    <location>
        <position position="66"/>
    </location>
    <ligand>
        <name>S-adenosyl-L-methionine</name>
        <dbReference type="ChEBI" id="CHEBI:59789"/>
    </ligand>
</feature>
<feature type="binding site" evidence="1">
    <location>
        <position position="91"/>
    </location>
    <ligand>
        <name>S-adenosyl-L-methionine</name>
        <dbReference type="ChEBI" id="CHEBI:59789"/>
    </ligand>
</feature>
<feature type="binding site" evidence="1">
    <location>
        <position position="113"/>
    </location>
    <ligand>
        <name>S-adenosyl-L-methionine</name>
        <dbReference type="ChEBI" id="CHEBI:59789"/>
    </ligand>
</feature>
<sequence>MNNRVHQGHLARKRFGQNFLNDQFVIDSIVSAINPQKGQAMVEIGPGLAALTEPVGERLDQLTVIELDRDLAARLQTHPFLGPKLTIYQQDAMTFNFGELAEKMGQPLHVFGNLPYNISTPLMFHLFSYTDAIADMHFMLQKEVVNRLVAGPNSKVYGRLSVMAQYYCNVIPVLEVPPSAFTPPPKVDSAVVRLVPHATMPHPVKDVRVLSRITTEAFNQRRKTIRNSLGNLFSVEVLTGMGIDPAMRAENISVAQYCQMANYLAENAPLQES</sequence>
<dbReference type="EC" id="2.1.1.182" evidence="1"/>
<dbReference type="EMBL" id="CP000034">
    <property type="protein sequence ID" value="ABB60314.1"/>
    <property type="molecule type" value="Genomic_DNA"/>
</dbReference>
<dbReference type="RefSeq" id="WP_001065369.1">
    <property type="nucleotide sequence ID" value="NC_007606.1"/>
</dbReference>
<dbReference type="RefSeq" id="YP_401803.1">
    <property type="nucleotide sequence ID" value="NC_007606.1"/>
</dbReference>
<dbReference type="SMR" id="Q32K43"/>
<dbReference type="STRING" id="300267.SDY_0076"/>
<dbReference type="EnsemblBacteria" id="ABB60314">
    <property type="protein sequence ID" value="ABB60314"/>
    <property type="gene ID" value="SDY_0076"/>
</dbReference>
<dbReference type="KEGG" id="sdy:SDY_0076"/>
<dbReference type="PATRIC" id="fig|300267.13.peg.86"/>
<dbReference type="HOGENOM" id="CLU_041220_0_1_6"/>
<dbReference type="Proteomes" id="UP000002716">
    <property type="component" value="Chromosome"/>
</dbReference>
<dbReference type="GO" id="GO:0005829">
    <property type="term" value="C:cytosol"/>
    <property type="evidence" value="ECO:0007669"/>
    <property type="project" value="TreeGrafter"/>
</dbReference>
<dbReference type="GO" id="GO:0052908">
    <property type="term" value="F:16S rRNA (adenine(1518)-N(6)/adenine(1519)-N(6))-dimethyltransferase activity"/>
    <property type="evidence" value="ECO:0007669"/>
    <property type="project" value="UniProtKB-EC"/>
</dbReference>
<dbReference type="GO" id="GO:0003723">
    <property type="term" value="F:RNA binding"/>
    <property type="evidence" value="ECO:0007669"/>
    <property type="project" value="UniProtKB-KW"/>
</dbReference>
<dbReference type="FunFam" id="1.10.8.100:FF:000001">
    <property type="entry name" value="Ribosomal RNA small subunit methyltransferase A"/>
    <property type="match status" value="1"/>
</dbReference>
<dbReference type="FunFam" id="3.40.50.150:FF:000006">
    <property type="entry name" value="Ribosomal RNA small subunit methyltransferase A"/>
    <property type="match status" value="1"/>
</dbReference>
<dbReference type="Gene3D" id="1.10.8.100">
    <property type="entry name" value="Ribosomal RNA adenine dimethylase-like, domain 2"/>
    <property type="match status" value="1"/>
</dbReference>
<dbReference type="Gene3D" id="3.40.50.150">
    <property type="entry name" value="Vaccinia Virus protein VP39"/>
    <property type="match status" value="1"/>
</dbReference>
<dbReference type="HAMAP" id="MF_00607">
    <property type="entry name" value="16SrRNA_methyltr_A"/>
    <property type="match status" value="1"/>
</dbReference>
<dbReference type="InterPro" id="IPR001737">
    <property type="entry name" value="KsgA/Erm"/>
</dbReference>
<dbReference type="InterPro" id="IPR023165">
    <property type="entry name" value="rRNA_Ade_diMease-like_C"/>
</dbReference>
<dbReference type="InterPro" id="IPR020596">
    <property type="entry name" value="rRNA_Ade_Mease_Trfase_CS"/>
</dbReference>
<dbReference type="InterPro" id="IPR020598">
    <property type="entry name" value="rRNA_Ade_methylase_Trfase_N"/>
</dbReference>
<dbReference type="InterPro" id="IPR011530">
    <property type="entry name" value="rRNA_adenine_dimethylase"/>
</dbReference>
<dbReference type="InterPro" id="IPR029063">
    <property type="entry name" value="SAM-dependent_MTases_sf"/>
</dbReference>
<dbReference type="NCBIfam" id="TIGR00755">
    <property type="entry name" value="ksgA"/>
    <property type="match status" value="1"/>
</dbReference>
<dbReference type="PANTHER" id="PTHR11727">
    <property type="entry name" value="DIMETHYLADENOSINE TRANSFERASE"/>
    <property type="match status" value="1"/>
</dbReference>
<dbReference type="PANTHER" id="PTHR11727:SF7">
    <property type="entry name" value="DIMETHYLADENOSINE TRANSFERASE-RELATED"/>
    <property type="match status" value="1"/>
</dbReference>
<dbReference type="Pfam" id="PF00398">
    <property type="entry name" value="RrnaAD"/>
    <property type="match status" value="1"/>
</dbReference>
<dbReference type="SMART" id="SM00650">
    <property type="entry name" value="rADc"/>
    <property type="match status" value="1"/>
</dbReference>
<dbReference type="SUPFAM" id="SSF53335">
    <property type="entry name" value="S-adenosyl-L-methionine-dependent methyltransferases"/>
    <property type="match status" value="1"/>
</dbReference>
<dbReference type="PROSITE" id="PS01131">
    <property type="entry name" value="RRNA_A_DIMETH"/>
    <property type="match status" value="1"/>
</dbReference>
<dbReference type="PROSITE" id="PS51689">
    <property type="entry name" value="SAM_RNA_A_N6_MT"/>
    <property type="match status" value="1"/>
</dbReference>
<proteinExistence type="inferred from homology"/>
<name>RSMA_SHIDS</name>
<reference key="1">
    <citation type="journal article" date="2005" name="Nucleic Acids Res.">
        <title>Genome dynamics and diversity of Shigella species, the etiologic agents of bacillary dysentery.</title>
        <authorList>
            <person name="Yang F."/>
            <person name="Yang J."/>
            <person name="Zhang X."/>
            <person name="Chen L."/>
            <person name="Jiang Y."/>
            <person name="Yan Y."/>
            <person name="Tang X."/>
            <person name="Wang J."/>
            <person name="Xiong Z."/>
            <person name="Dong J."/>
            <person name="Xue Y."/>
            <person name="Zhu Y."/>
            <person name="Xu X."/>
            <person name="Sun L."/>
            <person name="Chen S."/>
            <person name="Nie H."/>
            <person name="Peng J."/>
            <person name="Xu J."/>
            <person name="Wang Y."/>
            <person name="Yuan Z."/>
            <person name="Wen Y."/>
            <person name="Yao Z."/>
            <person name="Shen Y."/>
            <person name="Qiang B."/>
            <person name="Hou Y."/>
            <person name="Yu J."/>
            <person name="Jin Q."/>
        </authorList>
    </citation>
    <scope>NUCLEOTIDE SEQUENCE [LARGE SCALE GENOMIC DNA]</scope>
    <source>
        <strain>Sd197</strain>
    </source>
</reference>